<accession>Q84JQ4</accession>
<accession>Q9ZVV7</accession>
<dbReference type="EC" id="2.7.11.1" evidence="13"/>
<dbReference type="EMBL" id="AC005171">
    <property type="protein sequence ID" value="AAC67207.1"/>
    <property type="status" value="ALT_SEQ"/>
    <property type="molecule type" value="Genomic_DNA"/>
</dbReference>
<dbReference type="EMBL" id="CP002685">
    <property type="protein sequence ID" value="AEC06031.1"/>
    <property type="molecule type" value="Genomic_DNA"/>
</dbReference>
<dbReference type="EMBL" id="BT003936">
    <property type="protein sequence ID" value="AAO41982.1"/>
    <property type="molecule type" value="mRNA"/>
</dbReference>
<dbReference type="EMBL" id="BT005118">
    <property type="protein sequence ID" value="AAO50651.1"/>
    <property type="molecule type" value="mRNA"/>
</dbReference>
<dbReference type="EMBL" id="FJ708690">
    <property type="protein sequence ID" value="ACN59285.1"/>
    <property type="molecule type" value="mRNA"/>
</dbReference>
<dbReference type="PIR" id="G84481">
    <property type="entry name" value="G84481"/>
</dbReference>
<dbReference type="RefSeq" id="NP_178721.3">
    <property type="nucleotide sequence ID" value="NM_126680.4"/>
</dbReference>
<dbReference type="SMR" id="Q84JQ4"/>
<dbReference type="DIP" id="DIP-46187N"/>
<dbReference type="FunCoup" id="Q84JQ4">
    <property type="interactions" value="92"/>
</dbReference>
<dbReference type="IntAct" id="Q84JQ4">
    <property type="interactions" value="29"/>
</dbReference>
<dbReference type="STRING" id="3702.Q84JQ4"/>
<dbReference type="PaxDb" id="3702-AT2G07040.1"/>
<dbReference type="ProteomicsDB" id="226501"/>
<dbReference type="EnsemblPlants" id="AT2G07040.1">
    <property type="protein sequence ID" value="AT2G07040.1"/>
    <property type="gene ID" value="AT2G07040"/>
</dbReference>
<dbReference type="GeneID" id="815274"/>
<dbReference type="Gramene" id="AT2G07040.1">
    <property type="protein sequence ID" value="AT2G07040.1"/>
    <property type="gene ID" value="AT2G07040"/>
</dbReference>
<dbReference type="KEGG" id="ath:AT2G07040"/>
<dbReference type="Araport" id="AT2G07040"/>
<dbReference type="TAIR" id="AT2G07040">
    <property type="gene designation" value="PRK2A"/>
</dbReference>
<dbReference type="eggNOG" id="ENOG502QUJJ">
    <property type="taxonomic scope" value="Eukaryota"/>
</dbReference>
<dbReference type="HOGENOM" id="CLU_000288_92_6_1"/>
<dbReference type="InParanoid" id="Q84JQ4"/>
<dbReference type="OMA" id="EWTQELF"/>
<dbReference type="PhylomeDB" id="Q84JQ4"/>
<dbReference type="PRO" id="PR:Q84JQ4"/>
<dbReference type="Proteomes" id="UP000006548">
    <property type="component" value="Chromosome 2"/>
</dbReference>
<dbReference type="ExpressionAtlas" id="Q84JQ4">
    <property type="expression patterns" value="baseline and differential"/>
</dbReference>
<dbReference type="GO" id="GO:0005886">
    <property type="term" value="C:plasma membrane"/>
    <property type="evidence" value="ECO:0000314"/>
    <property type="project" value="TAIR"/>
</dbReference>
<dbReference type="GO" id="GO:0090406">
    <property type="term" value="C:pollen tube"/>
    <property type="evidence" value="ECO:0000314"/>
    <property type="project" value="TAIR"/>
</dbReference>
<dbReference type="GO" id="GO:0005524">
    <property type="term" value="F:ATP binding"/>
    <property type="evidence" value="ECO:0007669"/>
    <property type="project" value="UniProtKB-KW"/>
</dbReference>
<dbReference type="GO" id="GO:0106310">
    <property type="term" value="F:protein serine kinase activity"/>
    <property type="evidence" value="ECO:0007669"/>
    <property type="project" value="RHEA"/>
</dbReference>
<dbReference type="GO" id="GO:0004674">
    <property type="term" value="F:protein serine/threonine kinase activity"/>
    <property type="evidence" value="ECO:0000314"/>
    <property type="project" value="TAIR"/>
</dbReference>
<dbReference type="GO" id="GO:0009846">
    <property type="term" value="P:pollen germination"/>
    <property type="evidence" value="ECO:0000315"/>
    <property type="project" value="TAIR"/>
</dbReference>
<dbReference type="GO" id="GO:0009860">
    <property type="term" value="P:pollen tube growth"/>
    <property type="evidence" value="ECO:0000270"/>
    <property type="project" value="TAIR"/>
</dbReference>
<dbReference type="GO" id="GO:0080092">
    <property type="term" value="P:regulation of pollen tube growth"/>
    <property type="evidence" value="ECO:0000315"/>
    <property type="project" value="TAIR"/>
</dbReference>
<dbReference type="FunFam" id="1.10.510.10:FF:000480">
    <property type="entry name" value="Pollen receptor-like kinase 1"/>
    <property type="match status" value="1"/>
</dbReference>
<dbReference type="FunFam" id="3.30.200.20:FF:000307">
    <property type="entry name" value="pollen receptor-like kinase 1"/>
    <property type="match status" value="1"/>
</dbReference>
<dbReference type="FunFam" id="3.80.10.10:FF:001009">
    <property type="entry name" value="Pollen receptor-like kinase 6"/>
    <property type="match status" value="1"/>
</dbReference>
<dbReference type="Gene3D" id="3.30.200.20">
    <property type="entry name" value="Phosphorylase Kinase, domain 1"/>
    <property type="match status" value="1"/>
</dbReference>
<dbReference type="Gene3D" id="3.80.10.10">
    <property type="entry name" value="Ribonuclease Inhibitor"/>
    <property type="match status" value="2"/>
</dbReference>
<dbReference type="Gene3D" id="1.10.510.10">
    <property type="entry name" value="Transferase(Phosphotransferase) domain 1"/>
    <property type="match status" value="1"/>
</dbReference>
<dbReference type="InterPro" id="IPR011009">
    <property type="entry name" value="Kinase-like_dom_sf"/>
</dbReference>
<dbReference type="InterPro" id="IPR001611">
    <property type="entry name" value="Leu-rich_rpt"/>
</dbReference>
<dbReference type="InterPro" id="IPR032675">
    <property type="entry name" value="LRR_dom_sf"/>
</dbReference>
<dbReference type="InterPro" id="IPR013210">
    <property type="entry name" value="LRR_N_plant-typ"/>
</dbReference>
<dbReference type="InterPro" id="IPR046959">
    <property type="entry name" value="PRK1-6/SRF4-like"/>
</dbReference>
<dbReference type="InterPro" id="IPR000719">
    <property type="entry name" value="Prot_kinase_dom"/>
</dbReference>
<dbReference type="PANTHER" id="PTHR48007">
    <property type="entry name" value="LEUCINE-RICH REPEAT RECEPTOR-LIKE PROTEIN KINASE PXC1"/>
    <property type="match status" value="1"/>
</dbReference>
<dbReference type="PANTHER" id="PTHR48007:SF72">
    <property type="entry name" value="POLLEN RECEPTOR-LIKE KINASE 2"/>
    <property type="match status" value="1"/>
</dbReference>
<dbReference type="Pfam" id="PF00560">
    <property type="entry name" value="LRR_1"/>
    <property type="match status" value="2"/>
</dbReference>
<dbReference type="Pfam" id="PF08263">
    <property type="entry name" value="LRRNT_2"/>
    <property type="match status" value="1"/>
</dbReference>
<dbReference type="Pfam" id="PF00069">
    <property type="entry name" value="Pkinase"/>
    <property type="match status" value="1"/>
</dbReference>
<dbReference type="SUPFAM" id="SSF52058">
    <property type="entry name" value="L domain-like"/>
    <property type="match status" value="1"/>
</dbReference>
<dbReference type="SUPFAM" id="SSF56112">
    <property type="entry name" value="Protein kinase-like (PK-like)"/>
    <property type="match status" value="1"/>
</dbReference>
<dbReference type="PROSITE" id="PS50011">
    <property type="entry name" value="PROTEIN_KINASE_DOM"/>
    <property type="match status" value="1"/>
</dbReference>
<feature type="signal peptide" evidence="3">
    <location>
        <begin position="1"/>
        <end position="21"/>
    </location>
</feature>
<feature type="chain" id="PRO_0000431923" description="Pollen receptor-like kinase 2" evidence="3">
    <location>
        <begin position="22"/>
        <end position="647"/>
    </location>
</feature>
<feature type="transmembrane region" description="Helical" evidence="3">
    <location>
        <begin position="248"/>
        <end position="268"/>
    </location>
</feature>
<feature type="repeat" description="LRR 1" evidence="3">
    <location>
        <begin position="87"/>
        <end position="109"/>
    </location>
</feature>
<feature type="repeat" description="LRR 2" evidence="3">
    <location>
        <begin position="110"/>
        <end position="134"/>
    </location>
</feature>
<feature type="repeat" description="LRR 3" evidence="3">
    <location>
        <begin position="136"/>
        <end position="159"/>
    </location>
</feature>
<feature type="repeat" description="LRR 4" evidence="3">
    <location>
        <begin position="161"/>
        <end position="183"/>
    </location>
</feature>
<feature type="repeat" description="LRR 5" evidence="3">
    <location>
        <begin position="185"/>
        <end position="203"/>
    </location>
</feature>
<feature type="domain" description="Protein kinase" evidence="4">
    <location>
        <begin position="338"/>
        <end position="613"/>
    </location>
</feature>
<feature type="region of interest" description="Disordered" evidence="5">
    <location>
        <begin position="620"/>
        <end position="647"/>
    </location>
</feature>
<feature type="compositionally biased region" description="Polar residues" evidence="5">
    <location>
        <begin position="637"/>
        <end position="647"/>
    </location>
</feature>
<feature type="binding site" evidence="4">
    <location>
        <begin position="344"/>
        <end position="352"/>
    </location>
    <ligand>
        <name>ATP</name>
        <dbReference type="ChEBI" id="CHEBI:30616"/>
    </ligand>
</feature>
<feature type="binding site" evidence="4">
    <location>
        <position position="366"/>
    </location>
    <ligand>
        <name>ATP</name>
        <dbReference type="ChEBI" id="CHEBI:30616"/>
    </ligand>
</feature>
<feature type="modified residue" description="Phosphoserine" evidence="2">
    <location>
        <position position="340"/>
    </location>
</feature>
<feature type="modified residue" description="Phosphoserine" evidence="1">
    <location>
        <position position="418"/>
    </location>
</feature>
<feature type="modified residue" description="Phosphothreonine" evidence="1">
    <location>
        <position position="438"/>
    </location>
</feature>
<feature type="modified residue" description="Phosphotyrosine" evidence="1">
    <location>
        <position position="508"/>
    </location>
</feature>
<feature type="mutagenesis site" description="Reduced affinity for ROPGEF12, but no effect on pollen tube depolarization." evidence="9">
    <original>K</original>
    <variation>R</variation>
    <location>
        <position position="366"/>
    </location>
</feature>
<comment type="function">
    <text evidence="7 8 9">Receptor-like kinase involved in the control of pollen germination and pollen tube polar growth (PubMed:23024212, PubMed:24136420). Phosphorylates ROPGEF1 in its C-terminal region, releasing its auto-inhibition, and thereby activating the ROP1 signaling pathway (PubMed:23024212). May act as a scaffolding protein, recruiting ROPGEF12 to the plasma membrane by binding to its C-terminal domain (PubMed:18000057). Phosphorylates ROPGEF12, releasing its auto-inhibition (PubMed:18000057).</text>
</comment>
<comment type="catalytic activity">
    <reaction evidence="13">
        <text>L-seryl-[protein] + ATP = O-phospho-L-seryl-[protein] + ADP + H(+)</text>
        <dbReference type="Rhea" id="RHEA:17989"/>
        <dbReference type="Rhea" id="RHEA-COMP:9863"/>
        <dbReference type="Rhea" id="RHEA-COMP:11604"/>
        <dbReference type="ChEBI" id="CHEBI:15378"/>
        <dbReference type="ChEBI" id="CHEBI:29999"/>
        <dbReference type="ChEBI" id="CHEBI:30616"/>
        <dbReference type="ChEBI" id="CHEBI:83421"/>
        <dbReference type="ChEBI" id="CHEBI:456216"/>
        <dbReference type="EC" id="2.7.11.1"/>
    </reaction>
</comment>
<comment type="catalytic activity">
    <reaction evidence="13">
        <text>L-threonyl-[protein] + ATP = O-phospho-L-threonyl-[protein] + ADP + H(+)</text>
        <dbReference type="Rhea" id="RHEA:46608"/>
        <dbReference type="Rhea" id="RHEA-COMP:11060"/>
        <dbReference type="Rhea" id="RHEA-COMP:11605"/>
        <dbReference type="ChEBI" id="CHEBI:15378"/>
        <dbReference type="ChEBI" id="CHEBI:30013"/>
        <dbReference type="ChEBI" id="CHEBI:30616"/>
        <dbReference type="ChEBI" id="CHEBI:61977"/>
        <dbReference type="ChEBI" id="CHEBI:456216"/>
        <dbReference type="EC" id="2.7.11.1"/>
    </reaction>
</comment>
<comment type="activity regulation">
    <text evidence="8">The phosphorylation activity is calcium-independent.</text>
</comment>
<comment type="subunit">
    <text evidence="7 8">Part of a complex containing ROPGEF1 and ARAC11/ROP1 (PubMed:23024212). The interaction between PRK2, ROPGEF1 and ARAC11/ROP1 is phosphorylation-independent (PubMed:23024212). Interacts with ROPGEF12 (via C-terminus) (PubMed:18000057). Interacts with ROPGEF1 (via PRONE domain) (PubMed:23024212).</text>
</comment>
<comment type="subcellular location">
    <subcellularLocation>
        <location evidence="7">Cell membrane</location>
        <topology evidence="3">Single-pass membrane protein</topology>
    </subcellularLocation>
    <text evidence="7">ROPGEF12 colocalizes with PRK2 at the apical plasma membrane of pollen tube.</text>
</comment>
<comment type="tissue specificity">
    <text evidence="6 7">Expressed in pollen and/or in flowers, but not in leaves (PubMed:12139002). Expressed in pollen tube (PubMed:18000057).</text>
</comment>
<comment type="domain">
    <text evidence="4">The protein kinase domain may be catalytically impaired due to the lack of the conserved Asp active site at position 466, which is replaced by a His residue.</text>
</comment>
<comment type="domain">
    <text evidence="9">The juxtamembrane domain (274-319) is necessary for a relatively uniform plasma membrane localization. The C-terminal domain (614-647) is required for the induction of pollen tube depolarization. Both domains are required for the interaction of PRK2 with ROPGEF12.</text>
</comment>
<comment type="disruption phenotype">
    <text evidence="8">No effect on pollen germination and growth. Prk1 and prk2 or prk2 and prk5 double mutants have no effect on pollen germination and growth. Prk1, prk2 and prk5 triple mutant shows reduced pollen tube elongation.</text>
</comment>
<comment type="similarity">
    <text evidence="13">Belongs to the protein kinase superfamily. Ser/Thr protein kinase family.</text>
</comment>
<comment type="sequence caution" evidence="13">
    <conflict type="erroneous gene model prediction">
        <sequence resource="EMBL-CDS" id="AAC67207"/>
    </conflict>
</comment>
<keyword id="KW-0067">ATP-binding</keyword>
<keyword id="KW-1003">Cell membrane</keyword>
<keyword id="KW-0418">Kinase</keyword>
<keyword id="KW-0433">Leucine-rich repeat</keyword>
<keyword id="KW-0472">Membrane</keyword>
<keyword id="KW-0547">Nucleotide-binding</keyword>
<keyword id="KW-0597">Phosphoprotein</keyword>
<keyword id="KW-0675">Receptor</keyword>
<keyword id="KW-1185">Reference proteome</keyword>
<keyword id="KW-0677">Repeat</keyword>
<keyword id="KW-0732">Signal</keyword>
<keyword id="KW-0808">Transferase</keyword>
<keyword id="KW-0812">Transmembrane</keyword>
<keyword id="KW-1133">Transmembrane helix</keyword>
<name>PRK2_ARATH</name>
<reference key="1">
    <citation type="journal article" date="1999" name="Nature">
        <title>Sequence and analysis of chromosome 2 of the plant Arabidopsis thaliana.</title>
        <authorList>
            <person name="Lin X."/>
            <person name="Kaul S."/>
            <person name="Rounsley S.D."/>
            <person name="Shea T.P."/>
            <person name="Benito M.-I."/>
            <person name="Town C.D."/>
            <person name="Fujii C.Y."/>
            <person name="Mason T.M."/>
            <person name="Bowman C.L."/>
            <person name="Barnstead M.E."/>
            <person name="Feldblyum T.V."/>
            <person name="Buell C.R."/>
            <person name="Ketchum K.A."/>
            <person name="Lee J.J."/>
            <person name="Ronning C.M."/>
            <person name="Koo H.L."/>
            <person name="Moffat K.S."/>
            <person name="Cronin L.A."/>
            <person name="Shen M."/>
            <person name="Pai G."/>
            <person name="Van Aken S."/>
            <person name="Umayam L."/>
            <person name="Tallon L.J."/>
            <person name="Gill J.E."/>
            <person name="Adams M.D."/>
            <person name="Carrera A.J."/>
            <person name="Creasy T.H."/>
            <person name="Goodman H.M."/>
            <person name="Somerville C.R."/>
            <person name="Copenhaver G.P."/>
            <person name="Preuss D."/>
            <person name="Nierman W.C."/>
            <person name="White O."/>
            <person name="Eisen J.A."/>
            <person name="Salzberg S.L."/>
            <person name="Fraser C.M."/>
            <person name="Venter J.C."/>
        </authorList>
    </citation>
    <scope>NUCLEOTIDE SEQUENCE [LARGE SCALE GENOMIC DNA]</scope>
    <source>
        <strain>cv. Columbia</strain>
    </source>
</reference>
<reference key="2">
    <citation type="journal article" date="2017" name="Plant J.">
        <title>Araport11: a complete reannotation of the Arabidopsis thaliana reference genome.</title>
        <authorList>
            <person name="Cheng C.Y."/>
            <person name="Krishnakumar V."/>
            <person name="Chan A.P."/>
            <person name="Thibaud-Nissen F."/>
            <person name="Schobel S."/>
            <person name="Town C.D."/>
        </authorList>
    </citation>
    <scope>GENOME REANNOTATION</scope>
    <source>
        <strain>cv. Columbia</strain>
    </source>
</reference>
<reference key="3">
    <citation type="journal article" date="2003" name="Science">
        <title>Empirical analysis of transcriptional activity in the Arabidopsis genome.</title>
        <authorList>
            <person name="Yamada K."/>
            <person name="Lim J."/>
            <person name="Dale J.M."/>
            <person name="Chen H."/>
            <person name="Shinn P."/>
            <person name="Palm C.J."/>
            <person name="Southwick A.M."/>
            <person name="Wu H.C."/>
            <person name="Kim C.J."/>
            <person name="Nguyen M."/>
            <person name="Pham P.K."/>
            <person name="Cheuk R.F."/>
            <person name="Karlin-Newmann G."/>
            <person name="Liu S.X."/>
            <person name="Lam B."/>
            <person name="Sakano H."/>
            <person name="Wu T."/>
            <person name="Yu G."/>
            <person name="Miranda M."/>
            <person name="Quach H.L."/>
            <person name="Tripp M."/>
            <person name="Chang C.H."/>
            <person name="Lee J.M."/>
            <person name="Toriumi M.J."/>
            <person name="Chan M.M."/>
            <person name="Tang C.C."/>
            <person name="Onodera C.S."/>
            <person name="Deng J.M."/>
            <person name="Akiyama K."/>
            <person name="Ansari Y."/>
            <person name="Arakawa T."/>
            <person name="Banh J."/>
            <person name="Banno F."/>
            <person name="Bowser L."/>
            <person name="Brooks S.Y."/>
            <person name="Carninci P."/>
            <person name="Chao Q."/>
            <person name="Choy N."/>
            <person name="Enju A."/>
            <person name="Goldsmith A.D."/>
            <person name="Gurjal M."/>
            <person name="Hansen N.F."/>
            <person name="Hayashizaki Y."/>
            <person name="Johnson-Hopson C."/>
            <person name="Hsuan V.W."/>
            <person name="Iida K."/>
            <person name="Karnes M."/>
            <person name="Khan S."/>
            <person name="Koesema E."/>
            <person name="Ishida J."/>
            <person name="Jiang P.X."/>
            <person name="Jones T."/>
            <person name="Kawai J."/>
            <person name="Kamiya A."/>
            <person name="Meyers C."/>
            <person name="Nakajima M."/>
            <person name="Narusaka M."/>
            <person name="Seki M."/>
            <person name="Sakurai T."/>
            <person name="Satou M."/>
            <person name="Tamse R."/>
            <person name="Vaysberg M."/>
            <person name="Wallender E.K."/>
            <person name="Wong C."/>
            <person name="Yamamura Y."/>
            <person name="Yuan S."/>
            <person name="Shinozaki K."/>
            <person name="Davis R.W."/>
            <person name="Theologis A."/>
            <person name="Ecker J.R."/>
        </authorList>
    </citation>
    <scope>NUCLEOTIDE SEQUENCE [LARGE SCALE MRNA]</scope>
    <source>
        <strain>cv. Columbia</strain>
    </source>
</reference>
<reference key="4">
    <citation type="journal article" date="2010" name="BMC Genomics">
        <title>Genome-wide cloning and sequence analysis of leucine-rich repeat receptor-like protein kinase genes in Arabidopsis thaliana.</title>
        <authorList>
            <person name="Gou X."/>
            <person name="He K."/>
            <person name="Yang H."/>
            <person name="Yuan T."/>
            <person name="Lin H."/>
            <person name="Clouse S.D."/>
            <person name="Li J."/>
        </authorList>
    </citation>
    <scope>NUCLEOTIDE SEQUENCE [LARGE SCALE MRNA]</scope>
    <source>
        <strain>cv. Columbia</strain>
    </source>
</reference>
<reference key="5">
    <citation type="journal article" date="2002" name="Plant Mol. Biol.">
        <title>New pollen-specific receptor kinases identified in tomato, maize and Arabidopsis: the tomato kinases show overlapping but distinct localization patterns on pollen tubes.</title>
        <authorList>
            <person name="Kim H.U."/>
            <person name="Cotter R."/>
            <person name="Johnson S."/>
            <person name="Senda M."/>
            <person name="Dodds P."/>
            <person name="Kulikauska R."/>
            <person name="Tang W."/>
            <person name="Ezcura I."/>
            <person name="Herzmark P."/>
            <person name="McCormick S."/>
        </authorList>
    </citation>
    <scope>TISSUE SPECIFICITY</scope>
    <scope>GENE FAMILY</scope>
    <scope>NOMENCLATURE</scope>
</reference>
<reference key="6">
    <citation type="journal article" date="2007" name="Proc. Natl. Acad. Sci. U.S.A.">
        <title>A distinct mechanism regulating a pollen-specific guanine nucleotide exchange factor for the small GTPase Rop in Arabidopsis thaliana.</title>
        <authorList>
            <person name="Zhang Y."/>
            <person name="McCormick S."/>
        </authorList>
    </citation>
    <scope>FUNCTION</scope>
    <scope>INTERACTION WITH ROPGEF12</scope>
    <scope>TISSUE SPECIFICITY</scope>
    <scope>SUBCELLULAR LOCATION</scope>
</reference>
<reference key="7">
    <citation type="journal article" date="2013" name="J. Exp. Bot.">
        <title>The juxtamembrane and carboxy-terminal domains of Arabidopsis PRK2 are critical for ROP-induced growth in pollen tubes.</title>
        <authorList>
            <person name="Zhao X.Y."/>
            <person name="Wang Q."/>
            <person name="Li S."/>
            <person name="Ge F.R."/>
            <person name="Zhou L.Z."/>
            <person name="McCormick S."/>
            <person name="Zhang Y."/>
        </authorList>
    </citation>
    <scope>FUNCTION</scope>
    <scope>MUTAGENESIS OF LYS-366</scope>
    <scope>DOMAIN</scope>
</reference>
<reference key="8">
    <citation type="journal article" date="2013" name="Mol. Plant">
        <title>AtPRK2 Promotes ROP1 activation via RopGEFs in the control of polarized pollen tube growth.</title>
        <authorList>
            <person name="Chang F."/>
            <person name="Gu Y."/>
            <person name="Ma H."/>
            <person name="Yang Z."/>
        </authorList>
    </citation>
    <scope>FUNCTION</scope>
    <scope>DISRUPTION PHENOTYPE</scope>
    <scope>INTERACTION WITH ROPGEF1</scope>
    <scope>GENE FAMILY</scope>
    <scope>NOMENCLATURE</scope>
    <scope>ACTIVITY REGULATION</scope>
</reference>
<evidence type="ECO:0000250" key="1">
    <source>
        <dbReference type="UniProtKB" id="Q94AG2"/>
    </source>
</evidence>
<evidence type="ECO:0000250" key="2">
    <source>
        <dbReference type="UniProtKB" id="Q94F62"/>
    </source>
</evidence>
<evidence type="ECO:0000255" key="3"/>
<evidence type="ECO:0000255" key="4">
    <source>
        <dbReference type="PROSITE-ProRule" id="PRU00159"/>
    </source>
</evidence>
<evidence type="ECO:0000256" key="5">
    <source>
        <dbReference type="SAM" id="MobiDB-lite"/>
    </source>
</evidence>
<evidence type="ECO:0000269" key="6">
    <source>
    </source>
</evidence>
<evidence type="ECO:0000269" key="7">
    <source>
    </source>
</evidence>
<evidence type="ECO:0000269" key="8">
    <source>
    </source>
</evidence>
<evidence type="ECO:0000269" key="9">
    <source>
    </source>
</evidence>
<evidence type="ECO:0000303" key="10">
    <source>
    </source>
</evidence>
<evidence type="ECO:0000303" key="11">
    <source>
    </source>
</evidence>
<evidence type="ECO:0000303" key="12">
    <source>
    </source>
</evidence>
<evidence type="ECO:0000305" key="13"/>
<evidence type="ECO:0000312" key="14">
    <source>
        <dbReference type="Araport" id="AT2G07040"/>
    </source>
</evidence>
<evidence type="ECO:0000312" key="15">
    <source>
        <dbReference type="EMBL" id="AAC67207.1"/>
    </source>
</evidence>
<evidence type="ECO:0000312" key="16">
    <source>
        <dbReference type="EMBL" id="AAO41982.1"/>
    </source>
</evidence>
<organism evidence="16">
    <name type="scientific">Arabidopsis thaliana</name>
    <name type="common">Mouse-ear cress</name>
    <dbReference type="NCBI Taxonomy" id="3702"/>
    <lineage>
        <taxon>Eukaryota</taxon>
        <taxon>Viridiplantae</taxon>
        <taxon>Streptophyta</taxon>
        <taxon>Embryophyta</taxon>
        <taxon>Tracheophyta</taxon>
        <taxon>Spermatophyta</taxon>
        <taxon>Magnoliopsida</taxon>
        <taxon>eudicotyledons</taxon>
        <taxon>Gunneridae</taxon>
        <taxon>Pentapetalae</taxon>
        <taxon>rosids</taxon>
        <taxon>malvids</taxon>
        <taxon>Brassicales</taxon>
        <taxon>Brassicaceae</taxon>
        <taxon>Camelineae</taxon>
        <taxon>Arabidopsis</taxon>
    </lineage>
</organism>
<gene>
    <name evidence="12" type="primary">PRK2</name>
    <name evidence="11" type="synonym">PRK2A</name>
    <name evidence="10" type="synonym">PRKC</name>
    <name evidence="14" type="ordered locus">At2g07040</name>
    <name evidence="15" type="ORF">T4E14.15</name>
</gene>
<protein>
    <recommendedName>
        <fullName evidence="12">Pollen receptor-like kinase 2</fullName>
        <shortName evidence="12">AtPRK2</shortName>
        <ecNumber evidence="13">2.7.11.1</ecNumber>
    </recommendedName>
</protein>
<sequence>MESKCLMFVSIVSVFFMVVNGVSETETLLKFKNSLVIGRANALESWNRRNPPCKWTGVLCDRGFVWGLRLENLELSGSIDIEALMGLNSLRSLSFINNKFKGPFPEFKKLVALKSLYLSNNQFDLEIPKDAFDGMGWLKKLHLEQNNFIGEIPTSLVKSPKLIELRLDGNRFTGQIPEFRHHPNMLNLSNNALAGQIPNSFSTMDPKLFEGNKGLCGKPLDTKCSSPYNHSSEPKSSTKKTSSKFLYIVAAAVAALAASLIIIGVVIFLIRRRKKKQPLLSAEPGPSSLQMRAGIQESERGQGSYHSQNRAAKKMIHTTKLSFLRDDKGKFELQDLLKASAEILGSGCFGASYKTLLSNGSVMVVKRFKHMNSAGIDEFQEHMKRLGRLNHENLLPIVAYYYKKEEKLFVSDFVANGSLAAHLHGHKSLGQPSLDWPTRFNIVKGVGRGLLYLHKNLPSLMAPHGHLKSSNVLLSEKFEPLLMDYGLIPMINEESAQELMVAYKSPEYVKQSRVTKKTDVWGLGVLILEILTGKLLESFSQVDKESEEDLASWVRSSFKGEWTQELFDQEMGKTSNCEAHILNLMRIGLSCCEVDVEKRLDIREAVEKMEDLMKEREQGDDDFYSTYASEADGRSSRGLSSEGINLS</sequence>
<proteinExistence type="evidence at protein level"/>